<accession>P0DUV9</accession>
<name>HACL_ACTC0</name>
<organism>
    <name type="scientific">Actinomycetospora chiangmaiensis (strain DSM 45062 / JCM 15998 / CCTCC AA 205017 / NBRC 104400 / YIM 0006)</name>
    <dbReference type="NCBI Taxonomy" id="1120948"/>
    <lineage>
        <taxon>Bacteria</taxon>
        <taxon>Bacillati</taxon>
        <taxon>Actinomycetota</taxon>
        <taxon>Actinomycetes</taxon>
        <taxon>Pseudonocardiales</taxon>
        <taxon>Pseudonocardiaceae</taxon>
        <taxon>Actinomycetospora</taxon>
    </lineage>
</organism>
<dbReference type="EC" id="4.1.-.-" evidence="2"/>
<dbReference type="EMBL" id="KB903220">
    <property type="status" value="NOT_ANNOTATED_CDS"/>
    <property type="molecule type" value="Genomic_DNA"/>
</dbReference>
<dbReference type="RefSeq" id="WP_018331913.1">
    <property type="nucleotide sequence ID" value="NZ_KB903220.1"/>
</dbReference>
<dbReference type="PDB" id="7PT1">
    <property type="method" value="X-ray"/>
    <property type="resolution" value="1.55 A"/>
    <property type="chains" value="A/B=15-588"/>
</dbReference>
<dbReference type="PDB" id="7PT2">
    <property type="method" value="X-ray"/>
    <property type="resolution" value="1.76 A"/>
    <property type="chains" value="A/B=15-588"/>
</dbReference>
<dbReference type="PDB" id="7PT3">
    <property type="method" value="X-ray"/>
    <property type="resolution" value="1.63 A"/>
    <property type="chains" value="A/B=15-588"/>
</dbReference>
<dbReference type="PDB" id="7PT4">
    <property type="method" value="X-ray"/>
    <property type="resolution" value="1.64 A"/>
    <property type="chains" value="A/B=15-590"/>
</dbReference>
<dbReference type="PDBsum" id="7PT1"/>
<dbReference type="PDBsum" id="7PT2"/>
<dbReference type="PDBsum" id="7PT3"/>
<dbReference type="PDBsum" id="7PT4"/>
<dbReference type="SMR" id="P0DUV9"/>
<dbReference type="OrthoDB" id="4494979at2"/>
<dbReference type="GO" id="GO:0005948">
    <property type="term" value="C:acetolactate synthase complex"/>
    <property type="evidence" value="ECO:0007669"/>
    <property type="project" value="TreeGrafter"/>
</dbReference>
<dbReference type="GO" id="GO:0003984">
    <property type="term" value="F:acetolactate synthase activity"/>
    <property type="evidence" value="ECO:0007669"/>
    <property type="project" value="TreeGrafter"/>
</dbReference>
<dbReference type="GO" id="GO:0050660">
    <property type="term" value="F:flavin adenine dinucleotide binding"/>
    <property type="evidence" value="ECO:0007669"/>
    <property type="project" value="TreeGrafter"/>
</dbReference>
<dbReference type="GO" id="GO:0016829">
    <property type="term" value="F:lyase activity"/>
    <property type="evidence" value="ECO:0007669"/>
    <property type="project" value="UniProtKB-KW"/>
</dbReference>
<dbReference type="GO" id="GO:0000287">
    <property type="term" value="F:magnesium ion binding"/>
    <property type="evidence" value="ECO:0007669"/>
    <property type="project" value="InterPro"/>
</dbReference>
<dbReference type="GO" id="GO:0030976">
    <property type="term" value="F:thiamine pyrophosphate binding"/>
    <property type="evidence" value="ECO:0007669"/>
    <property type="project" value="InterPro"/>
</dbReference>
<dbReference type="GO" id="GO:0009097">
    <property type="term" value="P:isoleucine biosynthetic process"/>
    <property type="evidence" value="ECO:0007669"/>
    <property type="project" value="TreeGrafter"/>
</dbReference>
<dbReference type="GO" id="GO:0009099">
    <property type="term" value="P:L-valine biosynthetic process"/>
    <property type="evidence" value="ECO:0007669"/>
    <property type="project" value="TreeGrafter"/>
</dbReference>
<dbReference type="CDD" id="cd02004">
    <property type="entry name" value="TPP_BZL_OCoD_HPCL"/>
    <property type="match status" value="1"/>
</dbReference>
<dbReference type="CDD" id="cd07035">
    <property type="entry name" value="TPP_PYR_POX_like"/>
    <property type="match status" value="1"/>
</dbReference>
<dbReference type="FunFam" id="3.40.50.970:FF:000007">
    <property type="entry name" value="Acetolactate synthase"/>
    <property type="match status" value="1"/>
</dbReference>
<dbReference type="Gene3D" id="3.40.50.970">
    <property type="match status" value="2"/>
</dbReference>
<dbReference type="Gene3D" id="3.40.50.1220">
    <property type="entry name" value="TPP-binding domain"/>
    <property type="match status" value="1"/>
</dbReference>
<dbReference type="InterPro" id="IPR029035">
    <property type="entry name" value="DHS-like_NAD/FAD-binding_dom"/>
</dbReference>
<dbReference type="InterPro" id="IPR029061">
    <property type="entry name" value="THDP-binding"/>
</dbReference>
<dbReference type="InterPro" id="IPR012000">
    <property type="entry name" value="Thiamin_PyroP_enz_cen_dom"/>
</dbReference>
<dbReference type="InterPro" id="IPR012001">
    <property type="entry name" value="Thiamin_PyroP_enz_TPP-bd_dom"/>
</dbReference>
<dbReference type="InterPro" id="IPR000399">
    <property type="entry name" value="TPP-bd_CS"/>
</dbReference>
<dbReference type="InterPro" id="IPR045229">
    <property type="entry name" value="TPP_enz"/>
</dbReference>
<dbReference type="InterPro" id="IPR011766">
    <property type="entry name" value="TPP_enzyme_TPP-bd"/>
</dbReference>
<dbReference type="PANTHER" id="PTHR18968:SF166">
    <property type="entry name" value="2-HYDROXYACYL-COA LYASE 2"/>
    <property type="match status" value="1"/>
</dbReference>
<dbReference type="PANTHER" id="PTHR18968">
    <property type="entry name" value="THIAMINE PYROPHOSPHATE ENZYMES"/>
    <property type="match status" value="1"/>
</dbReference>
<dbReference type="Pfam" id="PF02775">
    <property type="entry name" value="TPP_enzyme_C"/>
    <property type="match status" value="1"/>
</dbReference>
<dbReference type="Pfam" id="PF00205">
    <property type="entry name" value="TPP_enzyme_M"/>
    <property type="match status" value="1"/>
</dbReference>
<dbReference type="Pfam" id="PF02776">
    <property type="entry name" value="TPP_enzyme_N"/>
    <property type="match status" value="1"/>
</dbReference>
<dbReference type="SUPFAM" id="SSF52467">
    <property type="entry name" value="DHS-like NAD/FAD-binding domain"/>
    <property type="match status" value="1"/>
</dbReference>
<dbReference type="SUPFAM" id="SSF52518">
    <property type="entry name" value="Thiamin diphosphate-binding fold (THDP-binding)"/>
    <property type="match status" value="2"/>
</dbReference>
<dbReference type="PROSITE" id="PS00187">
    <property type="entry name" value="TPP_ENZYMES"/>
    <property type="match status" value="1"/>
</dbReference>
<feature type="chain" id="PRO_0000454895" description="2-hydroxyacyl-CoA lyase">
    <location>
        <begin position="1"/>
        <end position="590"/>
    </location>
</feature>
<feature type="region of interest" description="C-terminal lid" evidence="2">
    <location>
        <begin position="566"/>
        <end position="590"/>
    </location>
</feature>
<feature type="active site" description="Proton acceptor" evidence="7">
    <location>
        <position position="493"/>
    </location>
</feature>
<feature type="binding site" evidence="2">
    <location>
        <position position="43"/>
    </location>
    <ligand>
        <name>2-hydroxyisobutanoyl-CoA</name>
        <dbReference type="ChEBI" id="CHEBI:131780"/>
    </ligand>
</feature>
<feature type="binding site" evidence="7">
    <location>
        <position position="128"/>
    </location>
    <ligand>
        <name>2-hydroxyisobutanoyl-CoA</name>
        <dbReference type="ChEBI" id="CHEBI:131780"/>
    </ligand>
</feature>
<feature type="binding site" evidence="2">
    <location>
        <position position="255"/>
    </location>
    <ligand>
        <name>2-hydroxyisobutanoyl-CoA</name>
        <dbReference type="ChEBI" id="CHEBI:131780"/>
    </ligand>
</feature>
<feature type="binding site" evidence="2">
    <location>
        <begin position="273"/>
        <end position="274"/>
    </location>
    <ligand>
        <name>2-hydroxyisobutanoyl-CoA</name>
        <dbReference type="ChEBI" id="CHEBI:131780"/>
    </ligand>
</feature>
<feature type="binding site" evidence="2">
    <location>
        <position position="362"/>
    </location>
    <ligand>
        <name>2-hydroxyisobutanoyl-CoA</name>
        <dbReference type="ChEBI" id="CHEBI:131780"/>
    </ligand>
</feature>
<feature type="binding site" evidence="2">
    <location>
        <begin position="410"/>
        <end position="412"/>
    </location>
    <ligand>
        <name>thiamine diphosphate</name>
        <dbReference type="ChEBI" id="CHEBI:58937"/>
    </ligand>
</feature>
<feature type="binding site" evidence="2">
    <location>
        <position position="417"/>
    </location>
    <ligand>
        <name>2-hydroxyisobutanoyl-CoA</name>
        <dbReference type="ChEBI" id="CHEBI:131780"/>
    </ligand>
</feature>
<feature type="binding site" evidence="2">
    <location>
        <position position="433"/>
    </location>
    <ligand>
        <name>thiamine diphosphate</name>
        <dbReference type="ChEBI" id="CHEBI:58937"/>
    </ligand>
</feature>
<feature type="binding site" evidence="2">
    <location>
        <position position="460"/>
    </location>
    <ligand>
        <name>Mg(2+)</name>
        <dbReference type="ChEBI" id="CHEBI:18420"/>
    </ligand>
</feature>
<feature type="binding site" evidence="2">
    <location>
        <begin position="461"/>
        <end position="462"/>
    </location>
    <ligand>
        <name>thiamine diphosphate</name>
        <dbReference type="ChEBI" id="CHEBI:58937"/>
    </ligand>
</feature>
<feature type="binding site" evidence="2">
    <location>
        <begin position="487"/>
        <end position="492"/>
    </location>
    <ligand>
        <name>thiamine diphosphate</name>
        <dbReference type="ChEBI" id="CHEBI:58937"/>
    </ligand>
</feature>
<feature type="binding site" evidence="2">
    <location>
        <position position="487"/>
    </location>
    <ligand>
        <name>Mg(2+)</name>
        <dbReference type="ChEBI" id="CHEBI:18420"/>
    </ligand>
</feature>
<feature type="binding site" evidence="2">
    <location>
        <position position="489"/>
    </location>
    <ligand>
        <name>Mg(2+)</name>
        <dbReference type="ChEBI" id="CHEBI:18420"/>
    </ligand>
</feature>
<feature type="binding site" evidence="2">
    <location>
        <begin position="561"/>
        <end position="564"/>
    </location>
    <ligand>
        <name>2-hydroxyisobutanoyl-CoA</name>
        <dbReference type="ChEBI" id="CHEBI:131780"/>
    </ligand>
</feature>
<feature type="mutagenesis site" description="10-fold decrease of 2-HIB-CoA cleavage rate, 6-fold increase in KM." evidence="2">
    <original>E</original>
    <variation>A</variation>
    <location>
        <position position="493"/>
    </location>
</feature>
<feature type="mutagenesis site" description="No cleavage of 2-HIB-CoA." evidence="2">
    <original>E</original>
    <variation>K</variation>
    <location>
        <position position="493"/>
    </location>
</feature>
<feature type="mutagenesis site" description="50-fold decrease of 2-HIB-CoA cleavage rate, 1.5-fold increase in KM." evidence="2">
    <original>E</original>
    <variation>Q</variation>
    <location>
        <position position="493"/>
    </location>
</feature>
<feature type="helix" evidence="8">
    <location>
        <begin position="21"/>
        <end position="31"/>
    </location>
</feature>
<feature type="strand" evidence="8">
    <location>
        <begin position="36"/>
        <end position="39"/>
    </location>
</feature>
<feature type="turn" evidence="8">
    <location>
        <begin position="43"/>
        <end position="45"/>
    </location>
</feature>
<feature type="helix" evidence="8">
    <location>
        <begin position="46"/>
        <end position="54"/>
    </location>
</feature>
<feature type="strand" evidence="8">
    <location>
        <begin position="58"/>
        <end position="61"/>
    </location>
</feature>
<feature type="helix" evidence="8">
    <location>
        <begin position="65"/>
        <end position="79"/>
    </location>
</feature>
<feature type="strand" evidence="8">
    <location>
        <begin position="83"/>
        <end position="87"/>
    </location>
</feature>
<feature type="helix" evidence="8">
    <location>
        <begin position="91"/>
        <end position="94"/>
    </location>
</feature>
<feature type="helix" evidence="8">
    <location>
        <begin position="97"/>
        <end position="106"/>
    </location>
</feature>
<feature type="strand" evidence="8">
    <location>
        <begin position="110"/>
        <end position="116"/>
    </location>
</feature>
<feature type="helix" evidence="8">
    <location>
        <begin position="119"/>
        <end position="121"/>
    </location>
</feature>
<feature type="helix" evidence="8">
    <location>
        <begin position="132"/>
        <end position="136"/>
    </location>
</feature>
<feature type="helix" evidence="8">
    <location>
        <begin position="137"/>
        <end position="139"/>
    </location>
</feature>
<feature type="strand" evidence="8">
    <location>
        <begin position="143"/>
        <end position="145"/>
    </location>
</feature>
<feature type="helix" evidence="8">
    <location>
        <begin position="149"/>
        <end position="151"/>
    </location>
</feature>
<feature type="helix" evidence="8">
    <location>
        <begin position="152"/>
        <end position="164"/>
    </location>
</feature>
<feature type="turn" evidence="8">
    <location>
        <begin position="165"/>
        <end position="167"/>
    </location>
</feature>
<feature type="strand" evidence="8">
    <location>
        <begin position="172"/>
        <end position="178"/>
    </location>
</feature>
<feature type="helix" evidence="8">
    <location>
        <begin position="179"/>
        <end position="182"/>
    </location>
</feature>
<feature type="strand" evidence="8">
    <location>
        <begin position="184"/>
        <end position="186"/>
    </location>
</feature>
<feature type="helix" evidence="8">
    <location>
        <begin position="188"/>
        <end position="190"/>
    </location>
</feature>
<feature type="helix" evidence="8">
    <location>
        <begin position="193"/>
        <end position="196"/>
    </location>
</feature>
<feature type="helix" evidence="8">
    <location>
        <begin position="208"/>
        <end position="220"/>
    </location>
</feature>
<feature type="strand" evidence="8">
    <location>
        <begin position="222"/>
        <end position="228"/>
    </location>
</feature>
<feature type="helix" evidence="8">
    <location>
        <begin position="230"/>
        <end position="233"/>
    </location>
</feature>
<feature type="helix" evidence="8">
    <location>
        <begin position="238"/>
        <end position="247"/>
    </location>
</feature>
<feature type="strand" evidence="8">
    <location>
        <begin position="250"/>
        <end position="252"/>
    </location>
</feature>
<feature type="helix" evidence="8">
    <location>
        <begin position="255"/>
        <end position="257"/>
    </location>
</feature>
<feature type="helix" evidence="9">
    <location>
        <begin position="270"/>
        <end position="272"/>
    </location>
</feature>
<feature type="helix" evidence="8">
    <location>
        <begin position="273"/>
        <end position="279"/>
    </location>
</feature>
<feature type="strand" evidence="8">
    <location>
        <begin position="281"/>
        <end position="287"/>
    </location>
</feature>
<feature type="helix" evidence="8">
    <location>
        <begin position="292"/>
        <end position="297"/>
    </location>
</feature>
<feature type="turn" evidence="8">
    <location>
        <begin position="299"/>
        <end position="301"/>
    </location>
</feature>
<feature type="strand" evidence="8">
    <location>
        <begin position="306"/>
        <end position="313"/>
    </location>
</feature>
<feature type="helix" evidence="8">
    <location>
        <begin position="314"/>
        <end position="316"/>
    </location>
</feature>
<feature type="strand" evidence="8">
    <location>
        <begin position="318"/>
        <end position="321"/>
    </location>
</feature>
<feature type="strand" evidence="8">
    <location>
        <begin position="324"/>
        <end position="329"/>
    </location>
</feature>
<feature type="helix" evidence="8">
    <location>
        <begin position="331"/>
        <end position="341"/>
    </location>
</feature>
<feature type="turn" evidence="8">
    <location>
        <begin position="342"/>
        <end position="344"/>
    </location>
</feature>
<feature type="helix" evidence="8">
    <location>
        <begin position="350"/>
        <end position="369"/>
    </location>
</feature>
<feature type="turn" evidence="8">
    <location>
        <begin position="370"/>
        <end position="372"/>
    </location>
</feature>
<feature type="helix" evidence="8">
    <location>
        <begin position="384"/>
        <end position="393"/>
    </location>
</feature>
<feature type="turn" evidence="8">
    <location>
        <begin position="395"/>
        <end position="397"/>
    </location>
</feature>
<feature type="helix" evidence="8">
    <location>
        <begin position="400"/>
        <end position="402"/>
    </location>
</feature>
<feature type="strand" evidence="8">
    <location>
        <begin position="404"/>
        <end position="410"/>
    </location>
</feature>
<feature type="helix" evidence="8">
    <location>
        <begin position="411"/>
        <end position="419"/>
    </location>
</feature>
<feature type="strand" evidence="8">
    <location>
        <begin position="424"/>
        <end position="427"/>
    </location>
</feature>
<feature type="turn" evidence="8">
    <location>
        <begin position="430"/>
        <end position="433"/>
    </location>
</feature>
<feature type="helix" evidence="8">
    <location>
        <begin position="438"/>
        <end position="448"/>
    </location>
</feature>
<feature type="strand" evidence="8">
    <location>
        <begin position="454"/>
        <end position="459"/>
    </location>
</feature>
<feature type="helix" evidence="8">
    <location>
        <begin position="460"/>
        <end position="466"/>
    </location>
</feature>
<feature type="helix" evidence="8">
    <location>
        <begin position="467"/>
        <end position="469"/>
    </location>
</feature>
<feature type="helix" evidence="8">
    <location>
        <begin position="470"/>
        <end position="475"/>
    </location>
</feature>
<feature type="strand" evidence="8">
    <location>
        <begin position="480"/>
        <end position="486"/>
    </location>
</feature>
<feature type="helix" evidence="8">
    <location>
        <begin position="491"/>
        <end position="501"/>
    </location>
</feature>
<feature type="helix" evidence="8">
    <location>
        <begin position="514"/>
        <end position="520"/>
    </location>
</feature>
<feature type="strand" evidence="8">
    <location>
        <begin position="524"/>
        <end position="528"/>
    </location>
</feature>
<feature type="helix" evidence="8">
    <location>
        <begin position="531"/>
        <end position="533"/>
    </location>
</feature>
<feature type="helix" evidence="8">
    <location>
        <begin position="534"/>
        <end position="543"/>
    </location>
</feature>
<feature type="strand" evidence="8">
    <location>
        <begin position="546"/>
        <end position="553"/>
    </location>
</feature>
<feature type="helix" evidence="8">
    <location>
        <begin position="560"/>
        <end position="563"/>
    </location>
</feature>
<feature type="helix" evidence="8">
    <location>
        <begin position="566"/>
        <end position="568"/>
    </location>
</feature>
<feature type="strand" evidence="8">
    <location>
        <begin position="571"/>
        <end position="575"/>
    </location>
</feature>
<feature type="helix" evidence="8">
    <location>
        <begin position="576"/>
        <end position="586"/>
    </location>
</feature>
<feature type="turn" evidence="9">
    <location>
        <begin position="588"/>
        <end position="590"/>
    </location>
</feature>
<keyword id="KW-0002">3D-structure</keyword>
<keyword id="KW-0456">Lyase</keyword>
<keyword id="KW-0460">Magnesium</keyword>
<keyword id="KW-0479">Metal-binding</keyword>
<keyword id="KW-0786">Thiamine pyrophosphate</keyword>
<evidence type="ECO:0000269" key="1">
    <source>
    </source>
</evidence>
<evidence type="ECO:0000269" key="2">
    <source>
    </source>
</evidence>
<evidence type="ECO:0000303" key="3">
    <source>
    </source>
</evidence>
<evidence type="ECO:0000303" key="4">
    <source>
    </source>
</evidence>
<evidence type="ECO:0000305" key="5"/>
<evidence type="ECO:0000305" key="6">
    <source>
    </source>
</evidence>
<evidence type="ECO:0000305" key="7">
    <source>
    </source>
</evidence>
<evidence type="ECO:0007829" key="8">
    <source>
        <dbReference type="PDB" id="7PT1"/>
    </source>
</evidence>
<evidence type="ECO:0007829" key="9">
    <source>
        <dbReference type="PDB" id="7PT4"/>
    </source>
</evidence>
<protein>
    <recommendedName>
        <fullName evidence="4">2-hydroxyacyl-CoA lyase</fullName>
        <shortName evidence="4">AcHACL</shortName>
        <shortName evidence="4">HACL</shortName>
        <ecNumber evidence="2">4.1.-.-</ecNumber>
    </recommendedName>
    <alternativeName>
        <fullName evidence="3">2-hydroxyisobutyryl-CoA lyase</fullName>
    </alternativeName>
</protein>
<proteinExistence type="evidence at protein level"/>
<comment type="function">
    <text evidence="1 2 6">A lyase that reversibly degrades 2-hydroxyisobutyryl-CoA (2-HIB-CoA) to acetone and formyl-CoA (PubMed:34952003). Probably also cleaves 2-hydroxy-2-methylbutyryl-CoA to butanone and formyl-CoA. Does not act on 2-hydroxy-2-ethylbutyryl-CoA (Probable). A C-terminal lid closes the active site upon substrate binding, and with residues Leu-127 and Ile-492 restricts the size of the active site cavity so it can only use short-chain (C4 and C5) acyl substrates (PubMed:34952003). Part of a pathway that allows cells to grow on 2-methylpropane-1,2-diol or 2-hydroxyisobutyric acid (2-HIBA) as a sole carbon source (PubMed:32351493).</text>
</comment>
<comment type="catalytic activity">
    <reaction evidence="2 6">
        <text>2-hydroxyisobutanoyl-CoA = formyl-CoA + acetone</text>
        <dbReference type="Rhea" id="RHEA:69424"/>
        <dbReference type="ChEBI" id="CHEBI:15347"/>
        <dbReference type="ChEBI" id="CHEBI:57376"/>
        <dbReference type="ChEBI" id="CHEBI:131780"/>
    </reaction>
    <physiologicalReaction direction="left-to-right" evidence="2">
        <dbReference type="Rhea" id="RHEA:69425"/>
    </physiologicalReaction>
</comment>
<comment type="cofactor">
    <cofactor evidence="2">
        <name>Mg(2+)</name>
        <dbReference type="ChEBI" id="CHEBI:18420"/>
    </cofactor>
</comment>
<comment type="cofactor">
    <cofactor evidence="2 6">
        <name>thiamine diphosphate</name>
        <dbReference type="ChEBI" id="CHEBI:58937"/>
    </cofactor>
    <text evidence="2 6">Binds 1 thiamine diphosphate per dimer.</text>
</comment>
<comment type="activity regulation">
    <text evidence="1">Activity is stimulated by thiamine diphosphate.</text>
</comment>
<comment type="biophysicochemical properties">
    <kinetics>
        <KM evidence="2">120 uM for 2-hydroxyisobutanoyl-CoA</KM>
        <Vmax evidence="2">1200.0 nmol/min/mg enzyme</Vmax>
        <text evidence="2">kcat is 1.3 sec(-1).</text>
    </kinetics>
</comment>
<comment type="subunit">
    <text evidence="2">A homotetramer formed by a dimer of dimers; active sites are located in the dimer interface.</text>
</comment>
<comment type="induction">
    <text evidence="1">29-fold induced by growth on 2-hydroxyisobutyric acid (2-HIBA), but not by growth on acetone (at protein level).</text>
</comment>
<comment type="domain">
    <text evidence="2">The C-terminal lid closes the active site upon substrate binding.</text>
</comment>
<comment type="biotechnology">
    <text evidence="7">This class of enzyme could be engineered to produce biotechnologically interesting condensations of formyl-CoA with aldehydes and ketones.</text>
</comment>
<comment type="similarity">
    <text evidence="5">Belongs to the TPP enzyme family.</text>
</comment>
<sequence length="590" mass="62765">MADRQDAERSGAGPARQSVPVASLVAEFLQEHGVDRVFGLQGGHIQPIWDQLARRGVRIVDVRDEGSAVHMAHAHTELTGQTAVAMVTAGPGVTNTVTAVANASVSRIPLLVIGGCPPIPQSNMGPLQDIPHTAILEPITRLARTLRSADQVLREFDEAWARASGDRGEPGPVYLEIPTDVLRRDVPPALQMREHLRAKPKRRPQPHPDDVAAVADLIRAAEKPAIISGRGARTTDGTDLVRLLDASGAAYLDTQESRGLVPDSHPAAVGSARSAVMRDTDLLITVGRQLDYQLGMGSPAVFPHAKVVRIADTASELIDNRRGEVEILAEPGAALAAIADALKDHTPDTSWRDELKAKHRKRAEDYRQALHSTENGADGHIHPNRIFGALDALDGDVLDLGETIMIADGGDLLSFGRLGITKARRYLDAGAFGCLGVATPFAIGAALAYPDRPVVAVTGDGAFGITATEIDTAVRHDAKIVVIVSNNRAWNIERYDQAENYGLVVGTDLADSDYAGVARAFGAHGERVTDPAELEGAIRRALANAPALVDVVTTQDAASPDSGKGLGFVPDYQALTPWNDAEVARRQEGI</sequence>
<reference key="1">
    <citation type="submission" date="2013-04" db="EMBL/GenBank/DDBJ databases">
        <authorList>
            <person name="Kyrpides N."/>
            <person name="Huntemann M."/>
            <person name="Han J."/>
            <person name="Chen A."/>
            <person name="Mavromatis K."/>
            <person name="Markowitz V."/>
            <person name="Palaniappan K."/>
            <person name="Ivanova N."/>
            <person name="Schaumberg A."/>
            <person name="Pati A."/>
            <person name="Liolios K."/>
            <person name="Nordberg H.P."/>
            <person name="Cantor M.N."/>
            <person name="Hua S.X."/>
            <person name="Woyke T."/>
        </authorList>
    </citation>
    <scope>NUCLEOTIDE SEQUENCE [LARGE SCALE GENOMIC DNA]</scope>
    <source>
        <strain>DSM 45062 / JCM 15998 / CCTCC AA 205017 / NBRC 104400 / YIM 0006</strain>
    </source>
</reference>
<reference key="2">
    <citation type="journal article" date="2020" name="Front. Microbiol.">
        <title>Actinobacterial Degradation of 2-Hydroxyisobutyric Acid Proceeds via Acetone and Formyl-CoA by Employing a Thiamine-Dependent Lyase Reaction.</title>
        <authorList>
            <person name="Rohwerder T."/>
            <person name="Rohde M.T."/>
            <person name="Jehmlich N."/>
            <person name="Purswani J."/>
        </authorList>
    </citation>
    <scope>IDENTIFICATION BY MASS SPECTROMETRY</scope>
    <scope>FUNCTION</scope>
    <scope>POSSIBLE THIAMINE DIPHOSPHATE COFACTOR</scope>
    <scope>ACTIVITY REGULATION</scope>
    <scope>INDUCTION BY 2-HIBA</scope>
    <source>
        <strain>DSM 45062 / JCM 15998 / CCTCC AA 205017 / NBRC 104400 / YIM 0006</strain>
    </source>
</reference>
<reference key="3">
    <citation type="journal article" date="2022" name="J. Biol. Chem.">
        <title>Mechanistic details of the actinobacterial lyase-catalyzed degradation reaction of 2-hydroxyisobutyryl-CoA.</title>
        <authorList>
            <person name="Zahn M."/>
            <person name="Koenig G."/>
            <person name="Pham H.V.C."/>
            <person name="Seroka B."/>
            <person name="Lazny R."/>
            <person name="Yang G."/>
            <person name="Ouerfelli O."/>
            <person name="Lotowski Z."/>
            <person name="Rohwerder T."/>
        </authorList>
    </citation>
    <scope>STRUCTURE BY ELECTRON MICROSCOPY (1.55 ANGSTROMS) OF 15-590 IN COMPLEX WITH COFACTORS; SUBSTRATE OR PRODUCT</scope>
    <scope>FUNCTION</scope>
    <scope>CATALYTIC ACTIVITY</scope>
    <scope>PROBABLE REACTION MECHANISM</scope>
    <scope>COFACTORS</scope>
    <scope>BIOPHYSICOCHEMICAL PROPERTIES</scope>
    <scope>SUBUNIT</scope>
    <scope>DOMAIN</scope>
    <scope>BIOTECHNOLOGY</scope>
    <scope>MUTAGENESIS OF GLU-493</scope>
    <source>
        <strain>DSM 45062 / JCM 15998 / CCTCC AA 205017 / NBRC 104400 / YIM 0006</strain>
    </source>
</reference>